<organism>
    <name type="scientific">Xanthomonas campestris pv. campestris (strain 8004)</name>
    <dbReference type="NCBI Taxonomy" id="314565"/>
    <lineage>
        <taxon>Bacteria</taxon>
        <taxon>Pseudomonadati</taxon>
        <taxon>Pseudomonadota</taxon>
        <taxon>Gammaproteobacteria</taxon>
        <taxon>Lysobacterales</taxon>
        <taxon>Lysobacteraceae</taxon>
        <taxon>Xanthomonas</taxon>
    </lineage>
</organism>
<keyword id="KW-0028">Amino-acid biosynthesis</keyword>
<keyword id="KW-0057">Aromatic amino acid biosynthesis</keyword>
<keyword id="KW-0456">Lyase</keyword>
<accession>Q4UZB2</accession>
<reference key="1">
    <citation type="journal article" date="2005" name="Genome Res.">
        <title>Comparative and functional genomic analyses of the pathogenicity of phytopathogen Xanthomonas campestris pv. campestris.</title>
        <authorList>
            <person name="Qian W."/>
            <person name="Jia Y."/>
            <person name="Ren S.-X."/>
            <person name="He Y.-Q."/>
            <person name="Feng J.-X."/>
            <person name="Lu L.-F."/>
            <person name="Sun Q."/>
            <person name="Ying G."/>
            <person name="Tang D.-J."/>
            <person name="Tang H."/>
            <person name="Wu W."/>
            <person name="Hao P."/>
            <person name="Wang L."/>
            <person name="Jiang B.-L."/>
            <person name="Zeng S."/>
            <person name="Gu W.-Y."/>
            <person name="Lu G."/>
            <person name="Rong L."/>
            <person name="Tian Y."/>
            <person name="Yao Z."/>
            <person name="Fu G."/>
            <person name="Chen B."/>
            <person name="Fang R."/>
            <person name="Qiang B."/>
            <person name="Chen Z."/>
            <person name="Zhao G.-P."/>
            <person name="Tang J.-L."/>
            <person name="He C."/>
        </authorList>
    </citation>
    <scope>NUCLEOTIDE SEQUENCE [LARGE SCALE GENOMIC DNA]</scope>
    <source>
        <strain>8004</strain>
    </source>
</reference>
<evidence type="ECO:0000255" key="1">
    <source>
        <dbReference type="HAMAP-Rule" id="MF_00169"/>
    </source>
</evidence>
<protein>
    <recommendedName>
        <fullName evidence="1">3-dehydroquinate dehydratase</fullName>
        <shortName evidence="1">3-dehydroquinase</shortName>
        <ecNumber evidence="1">4.2.1.10</ecNumber>
    </recommendedName>
    <alternativeName>
        <fullName evidence="1">Type II DHQase</fullName>
    </alternativeName>
</protein>
<name>AROQ_XANC8</name>
<dbReference type="EC" id="4.2.1.10" evidence="1"/>
<dbReference type="EMBL" id="CP000050">
    <property type="protein sequence ID" value="AAY47611.1"/>
    <property type="molecule type" value="Genomic_DNA"/>
</dbReference>
<dbReference type="RefSeq" id="WP_011035767.1">
    <property type="nucleotide sequence ID" value="NZ_CP155948.1"/>
</dbReference>
<dbReference type="SMR" id="Q4UZB2"/>
<dbReference type="GeneID" id="58011833"/>
<dbReference type="KEGG" id="xcb:XC_0530"/>
<dbReference type="HOGENOM" id="CLU_090968_1_0_6"/>
<dbReference type="UniPathway" id="UPA00053">
    <property type="reaction ID" value="UER00086"/>
</dbReference>
<dbReference type="Proteomes" id="UP000000420">
    <property type="component" value="Chromosome"/>
</dbReference>
<dbReference type="GO" id="GO:0003855">
    <property type="term" value="F:3-dehydroquinate dehydratase activity"/>
    <property type="evidence" value="ECO:0007669"/>
    <property type="project" value="UniProtKB-UniRule"/>
</dbReference>
<dbReference type="GO" id="GO:0008652">
    <property type="term" value="P:amino acid biosynthetic process"/>
    <property type="evidence" value="ECO:0007669"/>
    <property type="project" value="UniProtKB-KW"/>
</dbReference>
<dbReference type="GO" id="GO:0009073">
    <property type="term" value="P:aromatic amino acid family biosynthetic process"/>
    <property type="evidence" value="ECO:0007669"/>
    <property type="project" value="UniProtKB-KW"/>
</dbReference>
<dbReference type="GO" id="GO:0009423">
    <property type="term" value="P:chorismate biosynthetic process"/>
    <property type="evidence" value="ECO:0007669"/>
    <property type="project" value="UniProtKB-UniRule"/>
</dbReference>
<dbReference type="GO" id="GO:0019631">
    <property type="term" value="P:quinate catabolic process"/>
    <property type="evidence" value="ECO:0007669"/>
    <property type="project" value="TreeGrafter"/>
</dbReference>
<dbReference type="CDD" id="cd00466">
    <property type="entry name" value="DHQase_II"/>
    <property type="match status" value="1"/>
</dbReference>
<dbReference type="Gene3D" id="3.40.50.9100">
    <property type="entry name" value="Dehydroquinase, class II"/>
    <property type="match status" value="1"/>
</dbReference>
<dbReference type="HAMAP" id="MF_00169">
    <property type="entry name" value="AroQ"/>
    <property type="match status" value="1"/>
</dbReference>
<dbReference type="InterPro" id="IPR001874">
    <property type="entry name" value="DHquinase_II"/>
</dbReference>
<dbReference type="InterPro" id="IPR018509">
    <property type="entry name" value="DHquinase_II_CS"/>
</dbReference>
<dbReference type="InterPro" id="IPR036441">
    <property type="entry name" value="DHquinase_II_sf"/>
</dbReference>
<dbReference type="NCBIfam" id="TIGR01088">
    <property type="entry name" value="aroQ"/>
    <property type="match status" value="1"/>
</dbReference>
<dbReference type="NCBIfam" id="NF003804">
    <property type="entry name" value="PRK05395.1-1"/>
    <property type="match status" value="1"/>
</dbReference>
<dbReference type="NCBIfam" id="NF003805">
    <property type="entry name" value="PRK05395.1-2"/>
    <property type="match status" value="1"/>
</dbReference>
<dbReference type="NCBIfam" id="NF003806">
    <property type="entry name" value="PRK05395.1-3"/>
    <property type="match status" value="1"/>
</dbReference>
<dbReference type="NCBIfam" id="NF003807">
    <property type="entry name" value="PRK05395.1-4"/>
    <property type="match status" value="1"/>
</dbReference>
<dbReference type="PANTHER" id="PTHR21272">
    <property type="entry name" value="CATABOLIC 3-DEHYDROQUINASE"/>
    <property type="match status" value="1"/>
</dbReference>
<dbReference type="PANTHER" id="PTHR21272:SF3">
    <property type="entry name" value="CATABOLIC 3-DEHYDROQUINASE"/>
    <property type="match status" value="1"/>
</dbReference>
<dbReference type="Pfam" id="PF01220">
    <property type="entry name" value="DHquinase_II"/>
    <property type="match status" value="1"/>
</dbReference>
<dbReference type="PIRSF" id="PIRSF001399">
    <property type="entry name" value="DHquinase_II"/>
    <property type="match status" value="1"/>
</dbReference>
<dbReference type="SUPFAM" id="SSF52304">
    <property type="entry name" value="Type II 3-dehydroquinate dehydratase"/>
    <property type="match status" value="1"/>
</dbReference>
<dbReference type="PROSITE" id="PS01029">
    <property type="entry name" value="DEHYDROQUINASE_II"/>
    <property type="match status" value="1"/>
</dbReference>
<comment type="function">
    <text evidence="1">Catalyzes a trans-dehydration via an enolate intermediate.</text>
</comment>
<comment type="catalytic activity">
    <reaction evidence="1">
        <text>3-dehydroquinate = 3-dehydroshikimate + H2O</text>
        <dbReference type="Rhea" id="RHEA:21096"/>
        <dbReference type="ChEBI" id="CHEBI:15377"/>
        <dbReference type="ChEBI" id="CHEBI:16630"/>
        <dbReference type="ChEBI" id="CHEBI:32364"/>
        <dbReference type="EC" id="4.2.1.10"/>
    </reaction>
</comment>
<comment type="pathway">
    <text evidence="1">Metabolic intermediate biosynthesis; chorismate biosynthesis; chorismate from D-erythrose 4-phosphate and phosphoenolpyruvate: step 3/7.</text>
</comment>
<comment type="subunit">
    <text evidence="1">Homododecamer.</text>
</comment>
<comment type="similarity">
    <text evidence="1">Belongs to the type-II 3-dehydroquinase family.</text>
</comment>
<sequence length="148" mass="16090">MAHLLLLHGPNLNLLGTREPEVYGRTTLAQIDAALVDRAQAAGHTLDCLQSNAEHVLVERIHAAREDGTAFILINPAAFTHTSVSLRDALLGVGLPFVEIHLSNPHTREPFRHHSYLSDKAAGVICGFGADSYRLALEAVIARLERDS</sequence>
<proteinExistence type="inferred from homology"/>
<gene>
    <name evidence="1" type="primary">aroQ</name>
    <name type="ordered locus">XC_0530</name>
</gene>
<feature type="chain" id="PRO_1000023532" description="3-dehydroquinate dehydratase">
    <location>
        <begin position="1"/>
        <end position="148"/>
    </location>
</feature>
<feature type="active site" description="Proton acceptor" evidence="1">
    <location>
        <position position="23"/>
    </location>
</feature>
<feature type="active site" description="Proton donor" evidence="1">
    <location>
        <position position="101"/>
    </location>
</feature>
<feature type="binding site" evidence="1">
    <location>
        <position position="75"/>
    </location>
    <ligand>
        <name>substrate</name>
    </ligand>
</feature>
<feature type="binding site" evidence="1">
    <location>
        <position position="81"/>
    </location>
    <ligand>
        <name>substrate</name>
    </ligand>
</feature>
<feature type="binding site" evidence="1">
    <location>
        <position position="88"/>
    </location>
    <ligand>
        <name>substrate</name>
    </ligand>
</feature>
<feature type="binding site" evidence="1">
    <location>
        <begin position="102"/>
        <end position="103"/>
    </location>
    <ligand>
        <name>substrate</name>
    </ligand>
</feature>
<feature type="binding site" evidence="1">
    <location>
        <position position="112"/>
    </location>
    <ligand>
        <name>substrate</name>
    </ligand>
</feature>
<feature type="site" description="Transition state stabilizer" evidence="1">
    <location>
        <position position="18"/>
    </location>
</feature>